<protein>
    <recommendedName>
        <fullName>Outer capsid protein sigma-1</fullName>
        <shortName>Sigma1</shortName>
    </recommendedName>
    <alternativeName>
        <fullName>Cell attachment protein</fullName>
    </alternativeName>
    <alternativeName>
        <fullName>Hemagglutinin</fullName>
    </alternativeName>
</protein>
<organism>
    <name type="scientific">Reovirus type 3 (strain Dearing)</name>
    <name type="common">T3D</name>
    <name type="synonym">Mammalian orthoreovirus 3</name>
    <dbReference type="NCBI Taxonomy" id="10886"/>
    <lineage>
        <taxon>Viruses</taxon>
        <taxon>Riboviria</taxon>
        <taxon>Orthornavirae</taxon>
        <taxon>Duplornaviricota</taxon>
        <taxon>Resentoviricetes</taxon>
        <taxon>Reovirales</taxon>
        <taxon>Spinareoviridae</taxon>
        <taxon>Orthoreovirus</taxon>
        <taxon>Mammalian orthoreovirus</taxon>
    </lineage>
</organism>
<gene>
    <name type="primary">S1</name>
</gene>
<accession>P03528</accession>
<accession>A4ZY26</accession>
<accession>Q85668</accession>
<proteinExistence type="evidence at protein level"/>
<evidence type="ECO:0000255" key="1"/>
<evidence type="ECO:0000269" key="2">
    <source>
    </source>
</evidence>
<evidence type="ECO:0000305" key="3"/>
<evidence type="ECO:0007829" key="4">
    <source>
        <dbReference type="PDB" id="1KKE"/>
    </source>
</evidence>
<evidence type="ECO:0007829" key="5">
    <source>
        <dbReference type="PDB" id="2OJ5"/>
    </source>
</evidence>
<evidence type="ECO:0007829" key="6">
    <source>
        <dbReference type="PDB" id="3S6X"/>
    </source>
</evidence>
<evidence type="ECO:0007829" key="7">
    <source>
        <dbReference type="PDB" id="6GAP"/>
    </source>
</evidence>
<reference key="1">
    <citation type="journal article" date="1984" name="Nucleic Acids Res.">
        <title>Molecular cloning and sequencing of the reovirus (serotype 3) S1 gene which encodes the viral cell attachment protein sigma 1.</title>
        <authorList>
            <person name="Nagata L."/>
            <person name="Masri S.A."/>
            <person name="Mah D.C.W."/>
            <person name="Lee P.W.K."/>
        </authorList>
    </citation>
    <scope>NUCLEOTIDE SEQUENCE [GENOMIC RNA]</scope>
</reference>
<reference key="2">
    <citation type="journal article" date="1985" name="Proc. Natl. Acad. Sci. U.S.A.">
        <title>Sequences of the S1 genes of the three serotypes of reovirus.</title>
        <authorList>
            <person name="Cashdollar L.W."/>
            <person name="Chmelo R.A."/>
            <person name="Wiener J.R."/>
            <person name="Joklik W.K."/>
        </authorList>
    </citation>
    <scope>NUCLEOTIDE SEQUENCE [GENOMIC DNA]</scope>
</reference>
<reference key="3">
    <citation type="journal article" date="1985" name="Nature">
        <title>Sequence of reovirus haemagglutinin predicts a coiled-coil structure.</title>
        <authorList>
            <person name="Bassel-Duby R."/>
            <person name="Jayasuriya A.K."/>
            <person name="Chatterjee D."/>
            <person name="Sonenberg N."/>
            <person name="Maizel J.V. Jr."/>
            <person name="Fields B.N."/>
        </authorList>
    </citation>
    <scope>NUCLEOTIDE SEQUENCE [GENOMIC RNA]</scope>
</reference>
<reference key="4">
    <citation type="journal article" date="1990" name="Virology">
        <title>Identification of conserved domains in the cell attachment proteins of the three serotypes of reovirus.</title>
        <authorList>
            <person name="Duncan R."/>
            <person name="Horne D."/>
            <person name="Cashdollar L.W."/>
            <person name="Joklik W.K."/>
            <person name="Lee P.W.K."/>
        </authorList>
    </citation>
    <scope>NUCLEOTIDE SEQUENCE [MRNA]</scope>
</reference>
<reference key="5">
    <citation type="journal article" date="2007" name="Cell Host Microbe">
        <title>A plasmid-based reverse genetics system for animal double-stranded RNA viruses.</title>
        <authorList>
            <person name="Kobayashi T."/>
            <person name="Antar A.A."/>
            <person name="Boehme K.W."/>
            <person name="Danthi P."/>
            <person name="Eby E.A."/>
            <person name="Guglielmi K.M."/>
            <person name="Holm G.H."/>
            <person name="Johnson E.M."/>
            <person name="Maginnis M.S."/>
            <person name="Naik S."/>
            <person name="Skelton W.B."/>
            <person name="Wetzel J.D."/>
            <person name="Wilson G.J."/>
            <person name="Chappell J.D."/>
            <person name="Dermody T.S."/>
        </authorList>
    </citation>
    <scope>NUCLEOTIDE SEQUENCE [GENOMIC RNA]</scope>
    <source>
        <strain>Infectious clone</strain>
    </source>
</reference>
<reference key="6">
    <citation type="journal article" date="2001" name="Cell">
        <title>Junction adhesion molecule is a receptor for reovirus.</title>
        <authorList>
            <person name="Barton E.S."/>
            <person name="Forrest J.C."/>
            <person name="Connolly J.L."/>
            <person name="Chappell J.D."/>
            <person name="Liu Y."/>
            <person name="Schnell F.J."/>
            <person name="Nusrat A."/>
            <person name="Parkos C.A."/>
            <person name="Dermody T.S."/>
        </authorList>
    </citation>
    <scope>INTERACTION WITH HUMAN F11R</scope>
</reference>
<reference key="7">
    <citation type="journal article" date="2002" name="EMBO J.">
        <title>Crystal structure of reovirus attachment protein sigma1 reveals evolutionary relationship to adenovirus fiber.</title>
        <authorList>
            <person name="Chappell J.D."/>
            <person name="Prota A.E."/>
            <person name="Dermody T.S."/>
            <person name="Stehle T."/>
        </authorList>
    </citation>
    <scope>X-RAY CRYSTALLOGRAPHY (2.6 ANGSTROMS) OF 246-455</scope>
</reference>
<reference key="8">
    <citation type="journal article" date="2007" name="J. Biol. Chem.">
        <title>The reovirus sigma1 aspartic acid sandwich: a trimerization motif poised for conformational change.</title>
        <authorList>
            <person name="Schelling P."/>
            <person name="Guglielmi K.M."/>
            <person name="Kirchner E."/>
            <person name="Paetzold B."/>
            <person name="Dermody T.S."/>
            <person name="Stehle T."/>
        </authorList>
    </citation>
    <scope>X-RAY CRYSTALLOGRAPHY (1.75 ANGSTROMS) OF 292-455</scope>
</reference>
<comment type="function">
    <text>Fiber-like molecule that attaches the virion to the host cell membrane by binding to the primary receptor F11R/JAM-A and to sialic acid containing proteins (coreceptor). The interaction of sigma-1 with F11R is required for NF-kB activation and apoptosis. Binding to both sialic acid and F11R is required to induce maximal levels of apoptosis.</text>
</comment>
<comment type="subunit">
    <text evidence="2">Homotrimer. Interacts (via the head region) with human F11R.</text>
</comment>
<comment type="subcellular location">
    <subcellularLocation>
        <location>Virion</location>
    </subcellularLocation>
    <text>Found in the outer capsid (36 copies).</text>
</comment>
<comment type="PTM">
    <text>Undergoes dramatic conformational rearrangements during viral disassembly in the endocytic pathway.</text>
</comment>
<comment type="similarity">
    <text evidence="3">Belongs to the orthoreovirus sigma-1 protein family.</text>
</comment>
<keyword id="KW-0002">3D-structure</keyword>
<keyword id="KW-0167">Capsid protein</keyword>
<keyword id="KW-0175">Coiled coil</keyword>
<keyword id="KW-0325">Glycoprotein</keyword>
<keyword id="KW-0348">Hemagglutinin</keyword>
<keyword id="KW-0945">Host-virus interaction</keyword>
<keyword id="KW-1152">Outer capsid protein</keyword>
<keyword id="KW-1161">Viral attachment to host cell</keyword>
<keyword id="KW-0946">Virion</keyword>
<keyword id="KW-1160">Virus entry into host cell</keyword>
<organismHost>
    <name type="scientific">Mammalia</name>
    <dbReference type="NCBI Taxonomy" id="40674"/>
</organismHost>
<dbReference type="EMBL" id="M10262">
    <property type="protein sequence ID" value="AAA47275.1"/>
    <property type="molecule type" value="Genomic_DNA"/>
</dbReference>
<dbReference type="EMBL" id="X01161">
    <property type="protein sequence ID" value="CAA25605.1"/>
    <property type="molecule type" value="Genomic_RNA"/>
</dbReference>
<dbReference type="EMBL" id="M32862">
    <property type="protein sequence ID" value="AAA47274.1"/>
    <property type="molecule type" value="mRNA"/>
</dbReference>
<dbReference type="EMBL" id="EF494441">
    <property type="protein sequence ID" value="ABP48919.1"/>
    <property type="molecule type" value="Genomic_RNA"/>
</dbReference>
<dbReference type="PIR" id="S25234">
    <property type="entry name" value="S25234"/>
</dbReference>
<dbReference type="PDB" id="1KKE">
    <property type="method" value="X-ray"/>
    <property type="resolution" value="2.60 A"/>
    <property type="chains" value="A/B/C=246-455"/>
</dbReference>
<dbReference type="PDB" id="2OJ5">
    <property type="method" value="X-ray"/>
    <property type="resolution" value="1.75 A"/>
    <property type="chains" value="A/B/C/D/E/F=293-455"/>
</dbReference>
<dbReference type="PDB" id="2OJ6">
    <property type="method" value="X-ray"/>
    <property type="resolution" value="1.85 A"/>
    <property type="chains" value="A/B/C/D/E/F=293-455"/>
</dbReference>
<dbReference type="PDB" id="3EOY">
    <property type="method" value="X-ray"/>
    <property type="resolution" value="3.40 A"/>
    <property type="chains" value="A/B/C/D/E/F=293-455"/>
</dbReference>
<dbReference type="PDB" id="3S6X">
    <property type="method" value="X-ray"/>
    <property type="resolution" value="2.25 A"/>
    <property type="chains" value="A/B/C=170-455"/>
</dbReference>
<dbReference type="PDB" id="3S6Y">
    <property type="method" value="X-ray"/>
    <property type="resolution" value="2.79 A"/>
    <property type="chains" value="A/B/C=170-455"/>
</dbReference>
<dbReference type="PDB" id="3S6Z">
    <property type="method" value="X-ray"/>
    <property type="resolution" value="2.28 A"/>
    <property type="chains" value="A/B/C=170-455"/>
</dbReference>
<dbReference type="PDB" id="6GAP">
    <property type="method" value="X-ray"/>
    <property type="resolution" value="2.15 A"/>
    <property type="chains" value="A/B/C=25-262"/>
</dbReference>
<dbReference type="PDBsum" id="1KKE"/>
<dbReference type="PDBsum" id="2OJ5"/>
<dbReference type="PDBsum" id="2OJ6"/>
<dbReference type="PDBsum" id="3EOY"/>
<dbReference type="PDBsum" id="3S6X"/>
<dbReference type="PDBsum" id="3S6Y"/>
<dbReference type="PDBsum" id="3S6Z"/>
<dbReference type="PDBsum" id="6GAP"/>
<dbReference type="SMR" id="P03528"/>
<dbReference type="BindingDB" id="P03528"/>
<dbReference type="GlyCosmos" id="P03528">
    <property type="glycosylation" value="3 sites, No reported glycans"/>
</dbReference>
<dbReference type="ABCD" id="P03528">
    <property type="antibodies" value="1 sequenced antibody"/>
</dbReference>
<dbReference type="EvolutionaryTrace" id="P03528"/>
<dbReference type="Proteomes" id="UP000006373">
    <property type="component" value="Genome"/>
</dbReference>
<dbReference type="GO" id="GO:0039624">
    <property type="term" value="C:viral outer capsid"/>
    <property type="evidence" value="ECO:0007669"/>
    <property type="project" value="UniProtKB-KW"/>
</dbReference>
<dbReference type="GO" id="GO:0007155">
    <property type="term" value="P:cell adhesion"/>
    <property type="evidence" value="ECO:0007669"/>
    <property type="project" value="InterPro"/>
</dbReference>
<dbReference type="GO" id="GO:0046718">
    <property type="term" value="P:symbiont entry into host cell"/>
    <property type="evidence" value="ECO:0007669"/>
    <property type="project" value="UniProtKB-KW"/>
</dbReference>
<dbReference type="GO" id="GO:0019062">
    <property type="term" value="P:virion attachment to host cell"/>
    <property type="evidence" value="ECO:0007669"/>
    <property type="project" value="UniProtKB-KW"/>
</dbReference>
<dbReference type="Gene3D" id="1.20.5.340">
    <property type="match status" value="1"/>
</dbReference>
<dbReference type="Gene3D" id="6.10.250.3380">
    <property type="match status" value="1"/>
</dbReference>
<dbReference type="Gene3D" id="6.20.10.20">
    <property type="match status" value="1"/>
</dbReference>
<dbReference type="Gene3D" id="2.10.25.20">
    <property type="entry name" value="reovirus attachment protein sigma1, domain 1"/>
    <property type="match status" value="1"/>
</dbReference>
<dbReference type="Gene3D" id="2.60.90.20">
    <property type="entry name" value="Virus attachment protein , globular domain"/>
    <property type="match status" value="1"/>
</dbReference>
<dbReference type="InterPro" id="IPR008982">
    <property type="entry name" value="Adenovirus_pIV-like_att"/>
</dbReference>
<dbReference type="InterPro" id="IPR009013">
    <property type="entry name" value="Attachment_protein_shaft_sf"/>
</dbReference>
<dbReference type="InterPro" id="IPR002592">
    <property type="entry name" value="S1_C"/>
</dbReference>
<dbReference type="Pfam" id="PF01664">
    <property type="entry name" value="Reo_sigma1"/>
    <property type="match status" value="1"/>
</dbReference>
<dbReference type="SUPFAM" id="SSF51225">
    <property type="entry name" value="Fibre shaft of virus attachment proteins"/>
    <property type="match status" value="1"/>
</dbReference>
<dbReference type="SUPFAM" id="SSF57997">
    <property type="entry name" value="Tropomyosin"/>
    <property type="match status" value="1"/>
</dbReference>
<dbReference type="SUPFAM" id="SSF49835">
    <property type="entry name" value="Virus attachment protein globular domain"/>
    <property type="match status" value="1"/>
</dbReference>
<feature type="chain" id="PRO_0000040665" description="Outer capsid protein sigma-1">
    <location>
        <begin position="1"/>
        <end position="455"/>
    </location>
</feature>
<feature type="region of interest" description="Tail">
    <location>
        <begin position="1"/>
        <end position="307"/>
    </location>
</feature>
<feature type="region of interest" description="Head">
    <location>
        <begin position="308"/>
        <end position="455"/>
    </location>
</feature>
<feature type="coiled-coil region" evidence="1">
    <location>
        <begin position="116"/>
        <end position="148"/>
    </location>
</feature>
<feature type="glycosylation site" description="N-linked (GlcNAc...) asparagine; by host" evidence="1">
    <location>
        <position position="231"/>
    </location>
</feature>
<feature type="glycosylation site" description="N-linked (GlcNAc...) asparagine; by host" evidence="1">
    <location>
        <position position="264"/>
    </location>
</feature>
<feature type="glycosylation site" description="N-linked (GlcNAc...) asparagine; by host" evidence="1">
    <location>
        <position position="282"/>
    </location>
</feature>
<feature type="sequence conflict" description="In Ref. 5; ABP48919." evidence="3" ref="5">
    <original>A</original>
    <variation>V</variation>
    <location>
        <position position="22"/>
    </location>
</feature>
<feature type="sequence conflict" description="In Ref. 3; CAA25605 and 4; AAA47274." evidence="3" ref="3 4">
    <original>EL</original>
    <variation>DV</variation>
    <location>
        <begin position="118"/>
        <end position="119"/>
    </location>
</feature>
<feature type="sequence conflict" description="In Ref. 2; AAA47275." evidence="3" ref="2">
    <original>S</original>
    <variation>T</variation>
    <location>
        <position position="163"/>
    </location>
</feature>
<feature type="sequence conflict" description="In Ref. 5; ABP48919." evidence="3" ref="5">
    <original>A</original>
    <variation>T</variation>
    <location>
        <position position="408"/>
    </location>
</feature>
<feature type="helix" evidence="7">
    <location>
        <begin position="28"/>
        <end position="168"/>
    </location>
</feature>
<feature type="strand" evidence="7">
    <location>
        <begin position="177"/>
        <end position="180"/>
    </location>
</feature>
<feature type="strand" evidence="7">
    <location>
        <begin position="183"/>
        <end position="186"/>
    </location>
</feature>
<feature type="strand" evidence="7">
    <location>
        <begin position="192"/>
        <end position="195"/>
    </location>
</feature>
<feature type="strand" evidence="7">
    <location>
        <begin position="198"/>
        <end position="201"/>
    </location>
</feature>
<feature type="strand" evidence="7">
    <location>
        <begin position="207"/>
        <end position="212"/>
    </location>
</feature>
<feature type="strand" evidence="7">
    <location>
        <begin position="215"/>
        <end position="218"/>
    </location>
</feature>
<feature type="turn" evidence="7">
    <location>
        <begin position="222"/>
        <end position="224"/>
    </location>
</feature>
<feature type="strand" evidence="7">
    <location>
        <begin position="225"/>
        <end position="228"/>
    </location>
</feature>
<feature type="strand" evidence="7">
    <location>
        <begin position="231"/>
        <end position="234"/>
    </location>
</feature>
<feature type="turn" evidence="7">
    <location>
        <begin position="236"/>
        <end position="239"/>
    </location>
</feature>
<feature type="helix" evidence="7">
    <location>
        <begin position="240"/>
        <end position="243"/>
    </location>
</feature>
<feature type="strand" evidence="6">
    <location>
        <begin position="261"/>
        <end position="264"/>
    </location>
</feature>
<feature type="turn" evidence="6">
    <location>
        <begin position="265"/>
        <end position="268"/>
    </location>
</feature>
<feature type="strand" evidence="6">
    <location>
        <begin position="269"/>
        <end position="272"/>
    </location>
</feature>
<feature type="turn" evidence="6">
    <location>
        <begin position="276"/>
        <end position="278"/>
    </location>
</feature>
<feature type="strand" evidence="6">
    <location>
        <begin position="279"/>
        <end position="281"/>
    </location>
</feature>
<feature type="strand" evidence="6">
    <location>
        <begin position="287"/>
        <end position="289"/>
    </location>
</feature>
<feature type="strand" evidence="5">
    <location>
        <begin position="300"/>
        <end position="303"/>
    </location>
</feature>
<feature type="strand" evidence="5">
    <location>
        <begin position="306"/>
        <end position="309"/>
    </location>
</feature>
<feature type="helix" evidence="5">
    <location>
        <begin position="311"/>
        <end position="314"/>
    </location>
</feature>
<feature type="strand" evidence="5">
    <location>
        <begin position="316"/>
        <end position="328"/>
    </location>
</feature>
<feature type="strand" evidence="5">
    <location>
        <begin position="331"/>
        <end position="344"/>
    </location>
</feature>
<feature type="strand" evidence="5">
    <location>
        <begin position="347"/>
        <end position="352"/>
    </location>
</feature>
<feature type="strand" evidence="5">
    <location>
        <begin position="355"/>
        <end position="358"/>
    </location>
</feature>
<feature type="strand" evidence="5">
    <location>
        <begin position="362"/>
        <end position="369"/>
    </location>
</feature>
<feature type="strand" evidence="4">
    <location>
        <begin position="372"/>
        <end position="374"/>
    </location>
</feature>
<feature type="helix" evidence="5">
    <location>
        <begin position="380"/>
        <end position="383"/>
    </location>
</feature>
<feature type="turn" evidence="5">
    <location>
        <begin position="386"/>
        <end position="389"/>
    </location>
</feature>
<feature type="strand" evidence="5">
    <location>
        <begin position="394"/>
        <end position="408"/>
    </location>
</feature>
<feature type="strand" evidence="5">
    <location>
        <begin position="410"/>
        <end position="422"/>
    </location>
</feature>
<feature type="strand" evidence="5">
    <location>
        <begin position="425"/>
        <end position="431"/>
    </location>
</feature>
<feature type="strand" evidence="5">
    <location>
        <begin position="439"/>
        <end position="443"/>
    </location>
</feature>
<feature type="strand" evidence="5">
    <location>
        <begin position="446"/>
        <end position="452"/>
    </location>
</feature>
<name>SIGM1_REOVD</name>
<sequence length="455" mass="49095">MDPRLREEVVRLIIALTSDNGASLSKGLESRVSALEKTSQIHSDTILRITQGLDDANKRIIALEQSRDDLVASVSDAQLAISRLESSIGALQTVVNGLDSSVTQLGARVGQLETGLAELRVDHDNLVARVDTAERNIGSLTTELSTLTLRVTSIQADFESRISTLERTAVTSAGAPLSIRNNRMTMGLNDGLTLSGNNLAIRLPGNTGLNIQNGGLQFRFNTDQFQIVNNNLTLKTTVFDSINSRIGATEQSYVASAVTPLRLNSSTKVLDMLIDSSTLEINSSGQLTVRSTSPNLRYPIADVSGGIGMSPNYRFRQSMWIGIVSYSGSGLNWRVQVNSDIFIVDDYIHICLPAFDGFSIADGGDLSLNFVTGLLPPLLTGDTEPAFHNDVVTYGAQTVAIGLSSGGAPQYMSKNLWVEQWQDGVLRLRVEGGGSITHSNSKWPAMTVSYPRSFT</sequence>